<dbReference type="EC" id="4.3.2.10" evidence="1"/>
<dbReference type="EMBL" id="AP009510">
    <property type="protein sequence ID" value="BAG13978.1"/>
    <property type="molecule type" value="Genomic_DNA"/>
</dbReference>
<dbReference type="RefSeq" id="WP_015423503.1">
    <property type="nucleotide sequence ID" value="NC_020419.1"/>
</dbReference>
<dbReference type="SMR" id="B1H0E6"/>
<dbReference type="STRING" id="471821.TGRD_495"/>
<dbReference type="KEGG" id="rsd:TGRD_495"/>
<dbReference type="PATRIC" id="fig|471821.5.peg.807"/>
<dbReference type="HOGENOM" id="CLU_048577_4_0_0"/>
<dbReference type="UniPathway" id="UPA00031">
    <property type="reaction ID" value="UER00010"/>
</dbReference>
<dbReference type="Proteomes" id="UP000001691">
    <property type="component" value="Chromosome"/>
</dbReference>
<dbReference type="GO" id="GO:0005737">
    <property type="term" value="C:cytoplasm"/>
    <property type="evidence" value="ECO:0007669"/>
    <property type="project" value="UniProtKB-SubCell"/>
</dbReference>
<dbReference type="GO" id="GO:0000107">
    <property type="term" value="F:imidazoleglycerol-phosphate synthase activity"/>
    <property type="evidence" value="ECO:0007669"/>
    <property type="project" value="UniProtKB-UniRule"/>
</dbReference>
<dbReference type="GO" id="GO:0016829">
    <property type="term" value="F:lyase activity"/>
    <property type="evidence" value="ECO:0007669"/>
    <property type="project" value="UniProtKB-KW"/>
</dbReference>
<dbReference type="GO" id="GO:0000105">
    <property type="term" value="P:L-histidine biosynthetic process"/>
    <property type="evidence" value="ECO:0007669"/>
    <property type="project" value="UniProtKB-UniRule"/>
</dbReference>
<dbReference type="CDD" id="cd04731">
    <property type="entry name" value="HisF"/>
    <property type="match status" value="1"/>
</dbReference>
<dbReference type="FunFam" id="3.20.20.70:FF:000006">
    <property type="entry name" value="Imidazole glycerol phosphate synthase subunit HisF"/>
    <property type="match status" value="1"/>
</dbReference>
<dbReference type="Gene3D" id="3.20.20.70">
    <property type="entry name" value="Aldolase class I"/>
    <property type="match status" value="1"/>
</dbReference>
<dbReference type="HAMAP" id="MF_01013">
    <property type="entry name" value="HisF"/>
    <property type="match status" value="1"/>
</dbReference>
<dbReference type="InterPro" id="IPR013785">
    <property type="entry name" value="Aldolase_TIM"/>
</dbReference>
<dbReference type="InterPro" id="IPR006062">
    <property type="entry name" value="His_biosynth"/>
</dbReference>
<dbReference type="InterPro" id="IPR004651">
    <property type="entry name" value="HisF"/>
</dbReference>
<dbReference type="InterPro" id="IPR050064">
    <property type="entry name" value="IGPS_HisA/HisF"/>
</dbReference>
<dbReference type="InterPro" id="IPR011060">
    <property type="entry name" value="RibuloseP-bd_barrel"/>
</dbReference>
<dbReference type="NCBIfam" id="TIGR00735">
    <property type="entry name" value="hisF"/>
    <property type="match status" value="1"/>
</dbReference>
<dbReference type="PANTHER" id="PTHR21235:SF2">
    <property type="entry name" value="IMIDAZOLE GLYCEROL PHOSPHATE SYNTHASE HISHF"/>
    <property type="match status" value="1"/>
</dbReference>
<dbReference type="PANTHER" id="PTHR21235">
    <property type="entry name" value="IMIDAZOLE GLYCEROL PHOSPHATE SYNTHASE SUBUNIT HISF/H IGP SYNTHASE SUBUNIT HISF/H"/>
    <property type="match status" value="1"/>
</dbReference>
<dbReference type="Pfam" id="PF00977">
    <property type="entry name" value="His_biosynth"/>
    <property type="match status" value="1"/>
</dbReference>
<dbReference type="SUPFAM" id="SSF51366">
    <property type="entry name" value="Ribulose-phoshate binding barrel"/>
    <property type="match status" value="1"/>
</dbReference>
<proteinExistence type="inferred from homology"/>
<gene>
    <name evidence="1" type="primary">hisF</name>
    <name type="ordered locus">TGRD_495</name>
</gene>
<organism>
    <name type="scientific">Endomicrobium trichonymphae</name>
    <dbReference type="NCBI Taxonomy" id="1408204"/>
    <lineage>
        <taxon>Bacteria</taxon>
        <taxon>Pseudomonadati</taxon>
        <taxon>Elusimicrobiota</taxon>
        <taxon>Endomicrobiia</taxon>
        <taxon>Endomicrobiales</taxon>
        <taxon>Endomicrobiaceae</taxon>
        <taxon>Candidatus Endomicrobiellum</taxon>
    </lineage>
</organism>
<reference key="1">
    <citation type="journal article" date="2008" name="Proc. Natl. Acad. Sci. U.S.A.">
        <title>Complete genome of the uncultured termite group 1 bacteria in a single host protist cell.</title>
        <authorList>
            <person name="Hongoh Y."/>
            <person name="Sharma V.K."/>
            <person name="Prakash T."/>
            <person name="Noda S."/>
            <person name="Taylor T.D."/>
            <person name="Kudo T."/>
            <person name="Sakaki Y."/>
            <person name="Toyoda A."/>
            <person name="Hattori M."/>
            <person name="Ohkuma M."/>
        </authorList>
    </citation>
    <scope>NUCLEOTIDE SEQUENCE [LARGE SCALE GENOMIC DNA]</scope>
</reference>
<comment type="function">
    <text evidence="1">IGPS catalyzes the conversion of PRFAR and glutamine to IGP, AICAR and glutamate. The HisF subunit catalyzes the cyclization activity that produces IGP and AICAR from PRFAR using the ammonia provided by the HisH subunit.</text>
</comment>
<comment type="catalytic activity">
    <reaction evidence="1">
        <text>5-[(5-phospho-1-deoxy-D-ribulos-1-ylimino)methylamino]-1-(5-phospho-beta-D-ribosyl)imidazole-4-carboxamide + L-glutamine = D-erythro-1-(imidazol-4-yl)glycerol 3-phosphate + 5-amino-1-(5-phospho-beta-D-ribosyl)imidazole-4-carboxamide + L-glutamate + H(+)</text>
        <dbReference type="Rhea" id="RHEA:24793"/>
        <dbReference type="ChEBI" id="CHEBI:15378"/>
        <dbReference type="ChEBI" id="CHEBI:29985"/>
        <dbReference type="ChEBI" id="CHEBI:58278"/>
        <dbReference type="ChEBI" id="CHEBI:58359"/>
        <dbReference type="ChEBI" id="CHEBI:58475"/>
        <dbReference type="ChEBI" id="CHEBI:58525"/>
        <dbReference type="EC" id="4.3.2.10"/>
    </reaction>
</comment>
<comment type="pathway">
    <text evidence="1">Amino-acid biosynthesis; L-histidine biosynthesis; L-histidine from 5-phospho-alpha-D-ribose 1-diphosphate: step 5/9.</text>
</comment>
<comment type="subunit">
    <text evidence="1">Heterodimer of HisH and HisF.</text>
</comment>
<comment type="subcellular location">
    <subcellularLocation>
        <location evidence="1">Cytoplasm</location>
    </subcellularLocation>
</comment>
<comment type="similarity">
    <text evidence="1">Belongs to the HisA/HisF family.</text>
</comment>
<name>HIS6_ENDTX</name>
<feature type="chain" id="PRO_1000135057" description="Imidazole glycerol phosphate synthase subunit HisF">
    <location>
        <begin position="1"/>
        <end position="260"/>
    </location>
</feature>
<feature type="active site" evidence="1">
    <location>
        <position position="11"/>
    </location>
</feature>
<feature type="active site" evidence="1">
    <location>
        <position position="130"/>
    </location>
</feature>
<keyword id="KW-0028">Amino-acid biosynthesis</keyword>
<keyword id="KW-0963">Cytoplasm</keyword>
<keyword id="KW-0368">Histidine biosynthesis</keyword>
<keyword id="KW-0456">Lyase</keyword>
<sequence length="260" mass="27962">MLGIRVIPCLDVTDGRVVKGTNFVNLKDAGDPVEVAKQYNSDGADELVFLDITATHERRDTTVDLVRRTAEKVFIPLTVGGGIRTTEDIRNLLNAGADKVSLNSSAVKDPSIIKKASDKFGIQCIVVAIDAKKTGEHKWNVFVHGGRIDTGIDAVLWAKKAAAFGAGEILLTSMDKDGTKDGYDSELLKAISSSVVIPVIASGGAGKVEHFSKACEYGASAVLAASLFHYKELTIKEVKEHLKSKNIPVRQIRAEFAINN</sequence>
<evidence type="ECO:0000255" key="1">
    <source>
        <dbReference type="HAMAP-Rule" id="MF_01013"/>
    </source>
</evidence>
<protein>
    <recommendedName>
        <fullName evidence="1">Imidazole glycerol phosphate synthase subunit HisF</fullName>
        <ecNumber evidence="1">4.3.2.10</ecNumber>
    </recommendedName>
    <alternativeName>
        <fullName evidence="1">IGP synthase cyclase subunit</fullName>
    </alternativeName>
    <alternativeName>
        <fullName evidence="1">IGP synthase subunit HisF</fullName>
    </alternativeName>
    <alternativeName>
        <fullName evidence="1">ImGP synthase subunit HisF</fullName>
        <shortName evidence="1">IGPS subunit HisF</shortName>
    </alternativeName>
</protein>
<accession>B1H0E6</accession>